<sequence length="1230" mass="139091">MATKFTKNQQRAIEEKGHNILVAASAGSGKTTVLIERLIQKILSGVSVEKFLIVTFTNAAAKEMRERLEVAIEKRLKVADESQKRFLQEQLLILPAANISTIDAYALRIIEMYYHIIGLDPQFRLLSDTAERKLLQQDVLTDVLADFYDENNIHHEQFLTLVNNFGNPNQDDQLQKIILKLSDFAEARADGNEWLEKLREPYEVTGEPLTATALYVRSIRPIILEIIKNLIKKVEEVQLTITGIDELKKTQDAFLEIQDYLLLIQDKAMVAPWDELREAILDTPSGKINSQTKAIKEDPDLSATLEVARQIKGQVVGVKSQMNSLITSYFALDEKSWQLVQKESYKLIDTLILVTQAFRESFRRTKREEKLLDFPDLGTLALAILSDDVTKQTIQGQFDEILVDEYQDINQLQETLLTSVSNGHNMYMVGDVKQSIYGFRQAEPSLFTNKYKQFAKKESDDIRIDLADNFRSQNNVTNITNLIFTQIMDETLGDIAYAGEAKLVPKAAYPDDVPAVFHMDIIVEDAEEDLETDTEVFEKRQAQYALLAERILKLRETSIFDRKADPAGLRPVEYSDIAILTRAKSGYIDLVSTLRAAGIPVQVEGVGNYFQTMEVYLMLDILRVIDNPHQDIPLAAVLRSPVFNFDENELAAIRIADKMHDYWTALQAYAQQDQKAQNFLNLIEKWHAIATQNDLVALIWAIYDDTAWLDYVAGMPGGAQRQANLHALYEYARTYQNNTHSGLFRFIRYIEQLQSGDSDLGEAAQETDAQAVRIMTIHASKGLEFPIVFLPEFDKSFNTQDLKGGLLIQKNEGIGVEYIQPDALVMIPTLQKLVVQQALKRQSWSEEMRLLYVALTRAEQQLYIVGSVKVKGEAGNQSLKSLWQQSKNANGQFLPEFLRLQADSYLKWTIMSLARTKNKVLEDWLGDGQLPRLVGSETPLTGKVAVTLTNQNEIHAPIASTKGSELVEDGTYSPMDFDRAKTILNYQYANLQATQTAAYQSVSEIKQIFEDPDLAQMQTAVITENGQLQPANVLKVDELPLPDFMNDGSQKPSSSAVGTATHLILQLIDFTKINTVQSIEKLRDELVENKRILPSVAPLIEIDEILAFLQSDFAKQIIAHQKTLHREATFAMIMPANDIYDTLEDSAPVLIHGIIDGYFVDEASQTITLFDYKTDFVRNAQIDEDLTKLQARYKGQLHLYQQALQREYVGYQVGDPQLIALNVGRVISVK</sequence>
<name>ADDA_LEUMM</name>
<accession>Q03W49</accession>
<comment type="function">
    <text evidence="1">The heterodimer acts as both an ATP-dependent DNA helicase and an ATP-dependent, dual-direction single-stranded exonuclease. Recognizes the chi site generating a DNA molecule suitable for the initiation of homologous recombination. The AddA nuclease domain is required for chi fragment generation; this subunit has the helicase and 3' -&gt; 5' nuclease activities.</text>
</comment>
<comment type="catalytic activity">
    <reaction evidence="1">
        <text>Couples ATP hydrolysis with the unwinding of duplex DNA by translocating in the 3'-5' direction.</text>
        <dbReference type="EC" id="5.6.2.4"/>
    </reaction>
</comment>
<comment type="catalytic activity">
    <reaction evidence="1">
        <text>ATP + H2O = ADP + phosphate + H(+)</text>
        <dbReference type="Rhea" id="RHEA:13065"/>
        <dbReference type="ChEBI" id="CHEBI:15377"/>
        <dbReference type="ChEBI" id="CHEBI:15378"/>
        <dbReference type="ChEBI" id="CHEBI:30616"/>
        <dbReference type="ChEBI" id="CHEBI:43474"/>
        <dbReference type="ChEBI" id="CHEBI:456216"/>
        <dbReference type="EC" id="5.6.2.4"/>
    </reaction>
</comment>
<comment type="cofactor">
    <cofactor evidence="1">
        <name>Mg(2+)</name>
        <dbReference type="ChEBI" id="CHEBI:18420"/>
    </cofactor>
</comment>
<comment type="subunit">
    <text evidence="1">Heterodimer of AddA and AddB/RexB.</text>
</comment>
<comment type="similarity">
    <text evidence="1">Belongs to the helicase family. AddA subfamily.</text>
</comment>
<feature type="chain" id="PRO_0000379294" description="ATP-dependent helicase/nuclease subunit A">
    <location>
        <begin position="1"/>
        <end position="1230"/>
    </location>
</feature>
<feature type="domain" description="UvrD-like helicase ATP-binding" evidence="1">
    <location>
        <begin position="3"/>
        <end position="473"/>
    </location>
</feature>
<feature type="domain" description="UvrD-like helicase C-terminal" evidence="1">
    <location>
        <begin position="500"/>
        <end position="782"/>
    </location>
</feature>
<feature type="binding site" evidence="1">
    <location>
        <begin position="24"/>
        <end position="31"/>
    </location>
    <ligand>
        <name>ATP</name>
        <dbReference type="ChEBI" id="CHEBI:30616"/>
    </ligand>
</feature>
<reference key="1">
    <citation type="journal article" date="2006" name="Proc. Natl. Acad. Sci. U.S.A.">
        <title>Comparative genomics of the lactic acid bacteria.</title>
        <authorList>
            <person name="Makarova K.S."/>
            <person name="Slesarev A."/>
            <person name="Wolf Y.I."/>
            <person name="Sorokin A."/>
            <person name="Mirkin B."/>
            <person name="Koonin E.V."/>
            <person name="Pavlov A."/>
            <person name="Pavlova N."/>
            <person name="Karamychev V."/>
            <person name="Polouchine N."/>
            <person name="Shakhova V."/>
            <person name="Grigoriev I."/>
            <person name="Lou Y."/>
            <person name="Rohksar D."/>
            <person name="Lucas S."/>
            <person name="Huang K."/>
            <person name="Goodstein D.M."/>
            <person name="Hawkins T."/>
            <person name="Plengvidhya V."/>
            <person name="Welker D."/>
            <person name="Hughes J."/>
            <person name="Goh Y."/>
            <person name="Benson A."/>
            <person name="Baldwin K."/>
            <person name="Lee J.-H."/>
            <person name="Diaz-Muniz I."/>
            <person name="Dosti B."/>
            <person name="Smeianov V."/>
            <person name="Wechter W."/>
            <person name="Barabote R."/>
            <person name="Lorca G."/>
            <person name="Altermann E."/>
            <person name="Barrangou R."/>
            <person name="Ganesan B."/>
            <person name="Xie Y."/>
            <person name="Rawsthorne H."/>
            <person name="Tamir D."/>
            <person name="Parker C."/>
            <person name="Breidt F."/>
            <person name="Broadbent J.R."/>
            <person name="Hutkins R."/>
            <person name="O'Sullivan D."/>
            <person name="Steele J."/>
            <person name="Unlu G."/>
            <person name="Saier M.H. Jr."/>
            <person name="Klaenhammer T."/>
            <person name="Richardson P."/>
            <person name="Kozyavkin S."/>
            <person name="Weimer B.C."/>
            <person name="Mills D.A."/>
        </authorList>
    </citation>
    <scope>NUCLEOTIDE SEQUENCE [LARGE SCALE GENOMIC DNA]</scope>
    <source>
        <strain>ATCC 8293 / DSM 20343 / BCRC 11652 / CCM 1803 / JCM 6124 / NCDO 523 / NBRC 100496 / NCIMB 8023 / NCTC 12954 / NRRL B-1118 / 37Y</strain>
    </source>
</reference>
<dbReference type="EC" id="3.1.-.-" evidence="1"/>
<dbReference type="EC" id="5.6.2.4" evidence="1"/>
<dbReference type="EMBL" id="CP000414">
    <property type="protein sequence ID" value="ABJ62573.1"/>
    <property type="molecule type" value="Genomic_DNA"/>
</dbReference>
<dbReference type="RefSeq" id="WP_011680160.1">
    <property type="nucleotide sequence ID" value="NC_008531.1"/>
</dbReference>
<dbReference type="SMR" id="Q03W49"/>
<dbReference type="EnsemblBacteria" id="ABJ62573">
    <property type="protein sequence ID" value="ABJ62573"/>
    <property type="gene ID" value="LEUM_1481"/>
</dbReference>
<dbReference type="GeneID" id="29575863"/>
<dbReference type="KEGG" id="lme:LEUM_1481"/>
<dbReference type="eggNOG" id="COG1074">
    <property type="taxonomic scope" value="Bacteria"/>
</dbReference>
<dbReference type="HOGENOM" id="CLU_001114_3_1_9"/>
<dbReference type="Proteomes" id="UP000000362">
    <property type="component" value="Chromosome"/>
</dbReference>
<dbReference type="GO" id="GO:0005829">
    <property type="term" value="C:cytosol"/>
    <property type="evidence" value="ECO:0007669"/>
    <property type="project" value="TreeGrafter"/>
</dbReference>
<dbReference type="GO" id="GO:0033202">
    <property type="term" value="C:DNA helicase complex"/>
    <property type="evidence" value="ECO:0007669"/>
    <property type="project" value="TreeGrafter"/>
</dbReference>
<dbReference type="GO" id="GO:0043138">
    <property type="term" value="F:3'-5' DNA helicase activity"/>
    <property type="evidence" value="ECO:0007669"/>
    <property type="project" value="UniProtKB-UniRule"/>
</dbReference>
<dbReference type="GO" id="GO:0008408">
    <property type="term" value="F:3'-5' exonuclease activity"/>
    <property type="evidence" value="ECO:0007669"/>
    <property type="project" value="UniProtKB-UniRule"/>
</dbReference>
<dbReference type="GO" id="GO:0005524">
    <property type="term" value="F:ATP binding"/>
    <property type="evidence" value="ECO:0007669"/>
    <property type="project" value="UniProtKB-UniRule"/>
</dbReference>
<dbReference type="GO" id="GO:0016887">
    <property type="term" value="F:ATP hydrolysis activity"/>
    <property type="evidence" value="ECO:0007669"/>
    <property type="project" value="RHEA"/>
</dbReference>
<dbReference type="GO" id="GO:0003690">
    <property type="term" value="F:double-stranded DNA binding"/>
    <property type="evidence" value="ECO:0007669"/>
    <property type="project" value="UniProtKB-UniRule"/>
</dbReference>
<dbReference type="GO" id="GO:0000724">
    <property type="term" value="P:double-strand break repair via homologous recombination"/>
    <property type="evidence" value="ECO:0007669"/>
    <property type="project" value="UniProtKB-UniRule"/>
</dbReference>
<dbReference type="Gene3D" id="3.90.320.10">
    <property type="match status" value="1"/>
</dbReference>
<dbReference type="Gene3D" id="3.40.50.300">
    <property type="entry name" value="P-loop containing nucleotide triphosphate hydrolases"/>
    <property type="match status" value="4"/>
</dbReference>
<dbReference type="Gene3D" id="1.10.486.10">
    <property type="entry name" value="PCRA, domain 4"/>
    <property type="match status" value="1"/>
</dbReference>
<dbReference type="HAMAP" id="MF_01451">
    <property type="entry name" value="AddA"/>
    <property type="match status" value="1"/>
</dbReference>
<dbReference type="InterPro" id="IPR014152">
    <property type="entry name" value="AddA"/>
</dbReference>
<dbReference type="InterPro" id="IPR014017">
    <property type="entry name" value="DNA_helicase_UvrD-like_C"/>
</dbReference>
<dbReference type="InterPro" id="IPR000212">
    <property type="entry name" value="DNA_helicase_UvrD/REP"/>
</dbReference>
<dbReference type="InterPro" id="IPR027417">
    <property type="entry name" value="P-loop_NTPase"/>
</dbReference>
<dbReference type="InterPro" id="IPR011604">
    <property type="entry name" value="PDDEXK-like_dom_sf"/>
</dbReference>
<dbReference type="InterPro" id="IPR038726">
    <property type="entry name" value="PDDEXK_AddAB-type"/>
</dbReference>
<dbReference type="InterPro" id="IPR011335">
    <property type="entry name" value="Restrct_endonuc-II-like"/>
</dbReference>
<dbReference type="InterPro" id="IPR014016">
    <property type="entry name" value="UvrD-like_ATP-bd"/>
</dbReference>
<dbReference type="NCBIfam" id="TIGR02785">
    <property type="entry name" value="addA_Gpos"/>
    <property type="match status" value="1"/>
</dbReference>
<dbReference type="PANTHER" id="PTHR11070:SF48">
    <property type="entry name" value="ATP-DEPENDENT HELICASE_NUCLEASE SUBUNIT A"/>
    <property type="match status" value="1"/>
</dbReference>
<dbReference type="PANTHER" id="PTHR11070">
    <property type="entry name" value="UVRD / RECB / PCRA DNA HELICASE FAMILY MEMBER"/>
    <property type="match status" value="1"/>
</dbReference>
<dbReference type="Pfam" id="PF12705">
    <property type="entry name" value="PDDEXK_1"/>
    <property type="match status" value="1"/>
</dbReference>
<dbReference type="Pfam" id="PF00580">
    <property type="entry name" value="UvrD-helicase"/>
    <property type="match status" value="1"/>
</dbReference>
<dbReference type="Pfam" id="PF13361">
    <property type="entry name" value="UvrD_C"/>
    <property type="match status" value="1"/>
</dbReference>
<dbReference type="SUPFAM" id="SSF52540">
    <property type="entry name" value="P-loop containing nucleoside triphosphate hydrolases"/>
    <property type="match status" value="1"/>
</dbReference>
<dbReference type="SUPFAM" id="SSF52980">
    <property type="entry name" value="Restriction endonuclease-like"/>
    <property type="match status" value="1"/>
</dbReference>
<dbReference type="PROSITE" id="PS51198">
    <property type="entry name" value="UVRD_HELICASE_ATP_BIND"/>
    <property type="match status" value="1"/>
</dbReference>
<dbReference type="PROSITE" id="PS51217">
    <property type="entry name" value="UVRD_HELICASE_CTER"/>
    <property type="match status" value="1"/>
</dbReference>
<organism>
    <name type="scientific">Leuconostoc mesenteroides subsp. mesenteroides (strain ATCC 8293 / DSM 20343 / BCRC 11652 / CCM 1803 / JCM 6124 / NCDO 523 / NBRC 100496 / NCIMB 8023 / NCTC 12954 / NRRL B-1118 / 37Y)</name>
    <dbReference type="NCBI Taxonomy" id="203120"/>
    <lineage>
        <taxon>Bacteria</taxon>
        <taxon>Bacillati</taxon>
        <taxon>Bacillota</taxon>
        <taxon>Bacilli</taxon>
        <taxon>Lactobacillales</taxon>
        <taxon>Lactobacillaceae</taxon>
        <taxon>Leuconostoc</taxon>
    </lineage>
</organism>
<protein>
    <recommendedName>
        <fullName evidence="1">ATP-dependent helicase/nuclease subunit A</fullName>
        <ecNumber evidence="1">3.1.-.-</ecNumber>
        <ecNumber evidence="1">5.6.2.4</ecNumber>
    </recommendedName>
    <alternativeName>
        <fullName evidence="1">ATP-dependent helicase/nuclease AddA</fullName>
    </alternativeName>
    <alternativeName>
        <fullName evidence="1">DNA 3'-5' helicase AddA</fullName>
    </alternativeName>
</protein>
<keyword id="KW-0067">ATP-binding</keyword>
<keyword id="KW-0227">DNA damage</keyword>
<keyword id="KW-0234">DNA repair</keyword>
<keyword id="KW-0238">DNA-binding</keyword>
<keyword id="KW-0269">Exonuclease</keyword>
<keyword id="KW-0347">Helicase</keyword>
<keyword id="KW-0378">Hydrolase</keyword>
<keyword id="KW-0413">Isomerase</keyword>
<keyword id="KW-0540">Nuclease</keyword>
<keyword id="KW-0547">Nucleotide-binding</keyword>
<keyword id="KW-1185">Reference proteome</keyword>
<gene>
    <name evidence="1" type="primary">addA</name>
    <name type="ordered locus">LEUM_1481</name>
</gene>
<proteinExistence type="inferred from homology"/>
<evidence type="ECO:0000255" key="1">
    <source>
        <dbReference type="HAMAP-Rule" id="MF_01451"/>
    </source>
</evidence>